<protein>
    <recommendedName>
        <fullName evidence="1">Orotidine 5'-phosphate decarboxylase</fullName>
        <ecNumber evidence="1">4.1.1.23</ecNumber>
    </recommendedName>
    <alternativeName>
        <fullName evidence="1">OMP decarboxylase</fullName>
        <shortName evidence="1">OMPDCase</shortName>
        <shortName evidence="1">OMPdecase</shortName>
    </alternativeName>
</protein>
<organism>
    <name type="scientific">Leptospira borgpetersenii serovar Hardjo-bovis (strain JB197)</name>
    <dbReference type="NCBI Taxonomy" id="355277"/>
    <lineage>
        <taxon>Bacteria</taxon>
        <taxon>Pseudomonadati</taxon>
        <taxon>Spirochaetota</taxon>
        <taxon>Spirochaetia</taxon>
        <taxon>Leptospirales</taxon>
        <taxon>Leptospiraceae</taxon>
        <taxon>Leptospira</taxon>
    </lineage>
</organism>
<gene>
    <name evidence="1" type="primary">pyrF</name>
    <name type="ordered locus">LBJ_4227</name>
</gene>
<feature type="chain" id="PRO_1000138954" description="Orotidine 5'-phosphate decarboxylase">
    <location>
        <begin position="1"/>
        <end position="271"/>
    </location>
</feature>
<feature type="active site" description="Proton donor" evidence="1">
    <location>
        <position position="97"/>
    </location>
</feature>
<comment type="catalytic activity">
    <reaction evidence="1">
        <text>orotidine 5'-phosphate + H(+) = UMP + CO2</text>
        <dbReference type="Rhea" id="RHEA:11596"/>
        <dbReference type="ChEBI" id="CHEBI:15378"/>
        <dbReference type="ChEBI" id="CHEBI:16526"/>
        <dbReference type="ChEBI" id="CHEBI:57538"/>
        <dbReference type="ChEBI" id="CHEBI:57865"/>
        <dbReference type="EC" id="4.1.1.23"/>
    </reaction>
</comment>
<comment type="pathway">
    <text evidence="1">Pyrimidine metabolism; UMP biosynthesis via de novo pathway; UMP from orotate: step 2/2.</text>
</comment>
<comment type="similarity">
    <text evidence="1">Belongs to the OMP decarboxylase family. Type 2 subfamily.</text>
</comment>
<evidence type="ECO:0000255" key="1">
    <source>
        <dbReference type="HAMAP-Rule" id="MF_01215"/>
    </source>
</evidence>
<name>PYRF_LEPBJ</name>
<accession>Q04NB4</accession>
<dbReference type="EC" id="4.1.1.23" evidence="1"/>
<dbReference type="EMBL" id="CP000351">
    <property type="protein sequence ID" value="ABJ77606.1"/>
    <property type="molecule type" value="Genomic_DNA"/>
</dbReference>
<dbReference type="RefSeq" id="WP_011672216.1">
    <property type="nucleotide sequence ID" value="NC_008511.1"/>
</dbReference>
<dbReference type="SMR" id="Q04NB4"/>
<dbReference type="KEGG" id="lbj:LBJ_4227"/>
<dbReference type="HOGENOM" id="CLU_060704_1_0_12"/>
<dbReference type="UniPathway" id="UPA00070">
    <property type="reaction ID" value="UER00120"/>
</dbReference>
<dbReference type="Proteomes" id="UP000000656">
    <property type="component" value="Chromosome 2"/>
</dbReference>
<dbReference type="GO" id="GO:0004590">
    <property type="term" value="F:orotidine-5'-phosphate decarboxylase activity"/>
    <property type="evidence" value="ECO:0007669"/>
    <property type="project" value="UniProtKB-UniRule"/>
</dbReference>
<dbReference type="GO" id="GO:0006207">
    <property type="term" value="P:'de novo' pyrimidine nucleobase biosynthetic process"/>
    <property type="evidence" value="ECO:0007669"/>
    <property type="project" value="InterPro"/>
</dbReference>
<dbReference type="GO" id="GO:0044205">
    <property type="term" value="P:'de novo' UMP biosynthetic process"/>
    <property type="evidence" value="ECO:0007669"/>
    <property type="project" value="UniProtKB-UniRule"/>
</dbReference>
<dbReference type="CDD" id="cd04725">
    <property type="entry name" value="OMP_decarboxylase_like"/>
    <property type="match status" value="1"/>
</dbReference>
<dbReference type="Gene3D" id="3.20.20.70">
    <property type="entry name" value="Aldolase class I"/>
    <property type="match status" value="1"/>
</dbReference>
<dbReference type="HAMAP" id="MF_01215">
    <property type="entry name" value="OMPdecase_type2"/>
    <property type="match status" value="1"/>
</dbReference>
<dbReference type="InterPro" id="IPR013785">
    <property type="entry name" value="Aldolase_TIM"/>
</dbReference>
<dbReference type="InterPro" id="IPR011995">
    <property type="entry name" value="OMPdecase_type-2"/>
</dbReference>
<dbReference type="InterPro" id="IPR001754">
    <property type="entry name" value="OMPdeCOase_dom"/>
</dbReference>
<dbReference type="InterPro" id="IPR011060">
    <property type="entry name" value="RibuloseP-bd_barrel"/>
</dbReference>
<dbReference type="NCBIfam" id="TIGR02127">
    <property type="entry name" value="pyrF_sub2"/>
    <property type="match status" value="1"/>
</dbReference>
<dbReference type="PANTHER" id="PTHR43375">
    <property type="entry name" value="OROTIDINE 5'-PHOSPHATE DECARBOXYLASE"/>
    <property type="match status" value="1"/>
</dbReference>
<dbReference type="PANTHER" id="PTHR43375:SF1">
    <property type="entry name" value="OROTIDINE 5'-PHOSPHATE DECARBOXYLASE"/>
    <property type="match status" value="1"/>
</dbReference>
<dbReference type="Pfam" id="PF00215">
    <property type="entry name" value="OMPdecase"/>
    <property type="match status" value="1"/>
</dbReference>
<dbReference type="SMART" id="SM00934">
    <property type="entry name" value="OMPdecase"/>
    <property type="match status" value="1"/>
</dbReference>
<dbReference type="SUPFAM" id="SSF51366">
    <property type="entry name" value="Ribulose-phoshate binding barrel"/>
    <property type="match status" value="1"/>
</dbReference>
<proteinExistence type="inferred from homology"/>
<reference key="1">
    <citation type="journal article" date="2006" name="Proc. Natl. Acad. Sci. U.S.A.">
        <title>Genome reduction in Leptospira borgpetersenii reflects limited transmission potential.</title>
        <authorList>
            <person name="Bulach D.M."/>
            <person name="Zuerner R.L."/>
            <person name="Wilson P."/>
            <person name="Seemann T."/>
            <person name="McGrath A."/>
            <person name="Cullen P.A."/>
            <person name="Davis J."/>
            <person name="Johnson M."/>
            <person name="Kuczek E."/>
            <person name="Alt D.P."/>
            <person name="Peterson-Burch B."/>
            <person name="Coppel R.L."/>
            <person name="Rood J.I."/>
            <person name="Davies J.K."/>
            <person name="Adler B."/>
        </authorList>
    </citation>
    <scope>NUCLEOTIDE SEQUENCE [LARGE SCALE GENOMIC DNA]</scope>
    <source>
        <strain>JB197</strain>
    </source>
</reference>
<keyword id="KW-0210">Decarboxylase</keyword>
<keyword id="KW-0456">Lyase</keyword>
<keyword id="KW-0665">Pyrimidine biosynthesis</keyword>
<sequence>MNFQSKFLTRSQSLKSLLCVGLDPDYCKLPEIIKRSPEPLVHFCREIIDATAPYAVAYKPNIAFFEVFGSSGIRQFEKVIGHLKNNYPQIPIVADIKRGDLDNTARQYARYYFGDLQVDSLTLSPYMGLDTLRPFLEYQDHLVFWLCLTSSPDSIQFQKKRFSETGRTLYEEVAYVANSISPLNLGFVVGATNTYELEILRKQNPDRIFLIPGFGAQGAKLDDLLPVCGRYSLINSSRGIHFASDGLDFAARANQEAEKIHNAMQARFVFL</sequence>